<proteinExistence type="inferred from homology"/>
<name>RS12_PSET1</name>
<organism>
    <name type="scientific">Pseudoalteromonas translucida (strain TAC 125)</name>
    <dbReference type="NCBI Taxonomy" id="326442"/>
    <lineage>
        <taxon>Bacteria</taxon>
        <taxon>Pseudomonadati</taxon>
        <taxon>Pseudomonadota</taxon>
        <taxon>Gammaproteobacteria</taxon>
        <taxon>Alteromonadales</taxon>
        <taxon>Pseudoalteromonadaceae</taxon>
        <taxon>Pseudoalteromonas</taxon>
    </lineage>
</organism>
<dbReference type="EMBL" id="CR954246">
    <property type="protein sequence ID" value="CAI85327.1"/>
    <property type="molecule type" value="Genomic_DNA"/>
</dbReference>
<dbReference type="SMR" id="Q3ILP7"/>
<dbReference type="STRING" id="326442.PSHAa0224"/>
<dbReference type="KEGG" id="pha:PSHAa0224"/>
<dbReference type="eggNOG" id="COG0048">
    <property type="taxonomic scope" value="Bacteria"/>
</dbReference>
<dbReference type="HOGENOM" id="CLU_104295_1_2_6"/>
<dbReference type="BioCyc" id="PHAL326442:PSHA_RS01105-MONOMER"/>
<dbReference type="Proteomes" id="UP000006843">
    <property type="component" value="Chromosome I"/>
</dbReference>
<dbReference type="GO" id="GO:0015935">
    <property type="term" value="C:small ribosomal subunit"/>
    <property type="evidence" value="ECO:0007669"/>
    <property type="project" value="InterPro"/>
</dbReference>
<dbReference type="GO" id="GO:0019843">
    <property type="term" value="F:rRNA binding"/>
    <property type="evidence" value="ECO:0007669"/>
    <property type="project" value="UniProtKB-UniRule"/>
</dbReference>
<dbReference type="GO" id="GO:0003735">
    <property type="term" value="F:structural constituent of ribosome"/>
    <property type="evidence" value="ECO:0007669"/>
    <property type="project" value="InterPro"/>
</dbReference>
<dbReference type="GO" id="GO:0000049">
    <property type="term" value="F:tRNA binding"/>
    <property type="evidence" value="ECO:0007669"/>
    <property type="project" value="UniProtKB-UniRule"/>
</dbReference>
<dbReference type="GO" id="GO:0006412">
    <property type="term" value="P:translation"/>
    <property type="evidence" value="ECO:0007669"/>
    <property type="project" value="UniProtKB-UniRule"/>
</dbReference>
<dbReference type="CDD" id="cd03368">
    <property type="entry name" value="Ribosomal_S12"/>
    <property type="match status" value="1"/>
</dbReference>
<dbReference type="FunFam" id="2.40.50.140:FF:000001">
    <property type="entry name" value="30S ribosomal protein S12"/>
    <property type="match status" value="1"/>
</dbReference>
<dbReference type="Gene3D" id="2.40.50.140">
    <property type="entry name" value="Nucleic acid-binding proteins"/>
    <property type="match status" value="1"/>
</dbReference>
<dbReference type="HAMAP" id="MF_00403_B">
    <property type="entry name" value="Ribosomal_uS12_B"/>
    <property type="match status" value="1"/>
</dbReference>
<dbReference type="InterPro" id="IPR012340">
    <property type="entry name" value="NA-bd_OB-fold"/>
</dbReference>
<dbReference type="InterPro" id="IPR006032">
    <property type="entry name" value="Ribosomal_uS12"/>
</dbReference>
<dbReference type="InterPro" id="IPR005679">
    <property type="entry name" value="Ribosomal_uS12_bac"/>
</dbReference>
<dbReference type="NCBIfam" id="TIGR00981">
    <property type="entry name" value="rpsL_bact"/>
    <property type="match status" value="1"/>
</dbReference>
<dbReference type="PANTHER" id="PTHR11652">
    <property type="entry name" value="30S RIBOSOMAL PROTEIN S12 FAMILY MEMBER"/>
    <property type="match status" value="1"/>
</dbReference>
<dbReference type="Pfam" id="PF00164">
    <property type="entry name" value="Ribosom_S12_S23"/>
    <property type="match status" value="1"/>
</dbReference>
<dbReference type="PIRSF" id="PIRSF002133">
    <property type="entry name" value="Ribosomal_S12/S23"/>
    <property type="match status" value="1"/>
</dbReference>
<dbReference type="PRINTS" id="PR01034">
    <property type="entry name" value="RIBOSOMALS12"/>
</dbReference>
<dbReference type="SUPFAM" id="SSF50249">
    <property type="entry name" value="Nucleic acid-binding proteins"/>
    <property type="match status" value="1"/>
</dbReference>
<dbReference type="PROSITE" id="PS00055">
    <property type="entry name" value="RIBOSOMAL_S12"/>
    <property type="match status" value="1"/>
</dbReference>
<comment type="function">
    <text evidence="2">With S4 and S5 plays an important role in translational accuracy.</text>
</comment>
<comment type="function">
    <text evidence="2">Interacts with and stabilizes bases of the 16S rRNA that are involved in tRNA selection in the A site and with the mRNA backbone. Located at the interface of the 30S and 50S subunits, it traverses the body of the 30S subunit contacting proteins on the other side and probably holding the rRNA structure together. The combined cluster of proteins S8, S12 and S17 appears to hold together the shoulder and platform of the 30S subunit.</text>
</comment>
<comment type="subunit">
    <text evidence="2">Part of the 30S ribosomal subunit. Contacts proteins S8 and S17. May interact with IF1 in the 30S initiation complex.</text>
</comment>
<comment type="similarity">
    <text evidence="2">Belongs to the universal ribosomal protein uS12 family.</text>
</comment>
<protein>
    <recommendedName>
        <fullName evidence="2">Small ribosomal subunit protein uS12</fullName>
    </recommendedName>
    <alternativeName>
        <fullName evidence="4">30S ribosomal protein S12</fullName>
    </alternativeName>
</protein>
<sequence>MATINQLVRKPRRSKVTKSNSAALKACPQKRGVCTRVYTTTPKKPNSALRKVARVRLTNGFEVTSYIGGEGHNLQEHSVILIRGGRVKDLPGVRFHTVRGALDCAGVSDRRQARSKYGTKRPKG</sequence>
<gene>
    <name evidence="2" type="primary">rpsL</name>
    <name type="ordered locus">PSHAa0224</name>
</gene>
<accession>Q3ILP7</accession>
<evidence type="ECO:0000250" key="1"/>
<evidence type="ECO:0000255" key="2">
    <source>
        <dbReference type="HAMAP-Rule" id="MF_00403"/>
    </source>
</evidence>
<evidence type="ECO:0000256" key="3">
    <source>
        <dbReference type="SAM" id="MobiDB-lite"/>
    </source>
</evidence>
<evidence type="ECO:0000305" key="4"/>
<reference key="1">
    <citation type="journal article" date="2005" name="Genome Res.">
        <title>Coping with cold: the genome of the versatile marine Antarctica bacterium Pseudoalteromonas haloplanktis TAC125.</title>
        <authorList>
            <person name="Medigue C."/>
            <person name="Krin E."/>
            <person name="Pascal G."/>
            <person name="Barbe V."/>
            <person name="Bernsel A."/>
            <person name="Bertin P.N."/>
            <person name="Cheung F."/>
            <person name="Cruveiller S."/>
            <person name="D'Amico S."/>
            <person name="Duilio A."/>
            <person name="Fang G."/>
            <person name="Feller G."/>
            <person name="Ho C."/>
            <person name="Mangenot S."/>
            <person name="Marino G."/>
            <person name="Nilsson J."/>
            <person name="Parrilli E."/>
            <person name="Rocha E.P.C."/>
            <person name="Rouy Z."/>
            <person name="Sekowska A."/>
            <person name="Tutino M.L."/>
            <person name="Vallenet D."/>
            <person name="von Heijne G."/>
            <person name="Danchin A."/>
        </authorList>
    </citation>
    <scope>NUCLEOTIDE SEQUENCE [LARGE SCALE GENOMIC DNA]</scope>
    <source>
        <strain>TAC 125</strain>
    </source>
</reference>
<keyword id="KW-0488">Methylation</keyword>
<keyword id="KW-1185">Reference proteome</keyword>
<keyword id="KW-0687">Ribonucleoprotein</keyword>
<keyword id="KW-0689">Ribosomal protein</keyword>
<keyword id="KW-0694">RNA-binding</keyword>
<keyword id="KW-0699">rRNA-binding</keyword>
<keyword id="KW-0820">tRNA-binding</keyword>
<feature type="chain" id="PRO_0000226403" description="Small ribosomal subunit protein uS12">
    <location>
        <begin position="1"/>
        <end position="124"/>
    </location>
</feature>
<feature type="region of interest" description="Disordered" evidence="3">
    <location>
        <begin position="1"/>
        <end position="23"/>
    </location>
</feature>
<feature type="modified residue" description="3-methylthioaspartic acid" evidence="1">
    <location>
        <position position="89"/>
    </location>
</feature>